<comment type="function">
    <text evidence="1">Catalyzes the pyrimidine ring opening between N-3 and C-4 by an unusual flavin hydroperoxide-catalyzed mechanism, adding oxygen atoms in the process to yield ureidoacrylate peracid, that immediately reacts with FMN forming ureidoacrylate and FMN-N(5)-oxide. The FMN-N(5)-oxide reacts spontaneously with NADH to produce FMN. Requires the flavin reductase RutF to regenerate FMN in vivo.</text>
</comment>
<comment type="catalytic activity">
    <reaction evidence="1">
        <text>uracil + FMNH2 + NADH + O2 = (Z)-3-ureidoacrylate + FMN + NAD(+) + H2O + H(+)</text>
        <dbReference type="Rhea" id="RHEA:31587"/>
        <dbReference type="ChEBI" id="CHEBI:15377"/>
        <dbReference type="ChEBI" id="CHEBI:15378"/>
        <dbReference type="ChEBI" id="CHEBI:15379"/>
        <dbReference type="ChEBI" id="CHEBI:17568"/>
        <dbReference type="ChEBI" id="CHEBI:57540"/>
        <dbReference type="ChEBI" id="CHEBI:57618"/>
        <dbReference type="ChEBI" id="CHEBI:57945"/>
        <dbReference type="ChEBI" id="CHEBI:58210"/>
        <dbReference type="ChEBI" id="CHEBI:59891"/>
        <dbReference type="EC" id="1.14.99.46"/>
    </reaction>
</comment>
<comment type="catalytic activity">
    <reaction evidence="1">
        <text>thymine + FMNH2 + NADH + O2 = (Z)-2-methylureidoacrylate + FMN + NAD(+) + H2O + H(+)</text>
        <dbReference type="Rhea" id="RHEA:31599"/>
        <dbReference type="ChEBI" id="CHEBI:15377"/>
        <dbReference type="ChEBI" id="CHEBI:15378"/>
        <dbReference type="ChEBI" id="CHEBI:15379"/>
        <dbReference type="ChEBI" id="CHEBI:17821"/>
        <dbReference type="ChEBI" id="CHEBI:57540"/>
        <dbReference type="ChEBI" id="CHEBI:57618"/>
        <dbReference type="ChEBI" id="CHEBI:57945"/>
        <dbReference type="ChEBI" id="CHEBI:58210"/>
        <dbReference type="ChEBI" id="CHEBI:143783"/>
        <dbReference type="EC" id="1.14.99.46"/>
    </reaction>
</comment>
<comment type="similarity">
    <text evidence="1">Belongs to the NtaA/SnaA/DszA monooxygenase family. RutA subfamily.</text>
</comment>
<sequence length="367" mass="40414">MTKIGVFIPIGSRGWLISTTSPATMPSFELNKAVVQQAEHYGLDFALSMIKLRGYNGPSEYWVHNLESFTLMAGLAAVTKKIQLFASVAMLTMPPAVVARMAATIDSIAPGRFGINMVTGWQPKEYQQMGLELTPEHFARRYDYASEYVQVMRDLWTKGVSNFKGEFFQMDDCKLSPRPSAHIPVVGAGQSERGMRFVAEYGDYNFIGAGGDMNQTDGARTMVAKVEAAAKQSGRDTGAFLLLMVIADRTDELAFAKWELYKQGTDIEALEWQASQAGQDTVAKEGSTAAALVRQIKNPQPTGMLKLIGSYEKVAAMLDEIALSTPGLKGIMLTFDDFVIGMEQFGQYIQPLMRSRNPNLKRNLDAA</sequence>
<gene>
    <name evidence="1" type="primary">rutA</name>
    <name type="ordered locus">Avi_7126</name>
</gene>
<keyword id="KW-0285">Flavoprotein</keyword>
<keyword id="KW-0288">FMN</keyword>
<keyword id="KW-0503">Monooxygenase</keyword>
<keyword id="KW-0521">NADP</keyword>
<keyword id="KW-0560">Oxidoreductase</keyword>
<keyword id="KW-0614">Plasmid</keyword>
<keyword id="KW-1185">Reference proteome</keyword>
<geneLocation type="plasmid">
    <name>pAtS4e</name>
</geneLocation>
<feature type="chain" id="PRO_0000402583" description="Pyrimidine monooxygenase RutA">
    <location>
        <begin position="1"/>
        <end position="367"/>
    </location>
</feature>
<feature type="binding site" evidence="1">
    <location>
        <begin position="50"/>
        <end position="51"/>
    </location>
    <ligand>
        <name>FMN</name>
        <dbReference type="ChEBI" id="CHEBI:58210"/>
    </ligand>
</feature>
<feature type="binding site" evidence="1">
    <location>
        <position position="116"/>
    </location>
    <ligand>
        <name>FMN</name>
        <dbReference type="ChEBI" id="CHEBI:58210"/>
    </ligand>
</feature>
<feature type="binding site" evidence="1">
    <location>
        <position position="125"/>
    </location>
    <ligand>
        <name>FMN</name>
        <dbReference type="ChEBI" id="CHEBI:58210"/>
    </ligand>
</feature>
<feature type="binding site" evidence="1">
    <location>
        <begin position="141"/>
        <end position="142"/>
    </location>
    <ligand>
        <name>FMN</name>
        <dbReference type="ChEBI" id="CHEBI:58210"/>
    </ligand>
</feature>
<feature type="binding site" evidence="1">
    <location>
        <position position="191"/>
    </location>
    <ligand>
        <name>FMN</name>
        <dbReference type="ChEBI" id="CHEBI:58210"/>
    </ligand>
</feature>
<proteinExistence type="inferred from homology"/>
<reference key="1">
    <citation type="journal article" date="2009" name="J. Bacteriol.">
        <title>Genome sequences of three Agrobacterium biovars help elucidate the evolution of multichromosome genomes in bacteria.</title>
        <authorList>
            <person name="Slater S.C."/>
            <person name="Goldman B.S."/>
            <person name="Goodner B."/>
            <person name="Setubal J.C."/>
            <person name="Farrand S.K."/>
            <person name="Nester E.W."/>
            <person name="Burr T.J."/>
            <person name="Banta L."/>
            <person name="Dickerman A.W."/>
            <person name="Paulsen I."/>
            <person name="Otten L."/>
            <person name="Suen G."/>
            <person name="Welch R."/>
            <person name="Almeida N.F."/>
            <person name="Arnold F."/>
            <person name="Burton O.T."/>
            <person name="Du Z."/>
            <person name="Ewing A."/>
            <person name="Godsy E."/>
            <person name="Heisel S."/>
            <person name="Houmiel K.L."/>
            <person name="Jhaveri J."/>
            <person name="Lu J."/>
            <person name="Miller N.M."/>
            <person name="Norton S."/>
            <person name="Chen Q."/>
            <person name="Phoolcharoen W."/>
            <person name="Ohlin V."/>
            <person name="Ondrusek D."/>
            <person name="Pride N."/>
            <person name="Stricklin S.L."/>
            <person name="Sun J."/>
            <person name="Wheeler C."/>
            <person name="Wilson L."/>
            <person name="Zhu H."/>
            <person name="Wood D.W."/>
        </authorList>
    </citation>
    <scope>NUCLEOTIDE SEQUENCE [LARGE SCALE GENOMIC DNA]</scope>
    <source>
        <strain>ATCC BAA-846 / DSM 112012 / S4</strain>
    </source>
</reference>
<accession>B9K4P2</accession>
<dbReference type="EC" id="1.14.99.46" evidence="1"/>
<dbReference type="EMBL" id="CP000638">
    <property type="protein sequence ID" value="ACM39840.1"/>
    <property type="molecule type" value="Genomic_DNA"/>
</dbReference>
<dbReference type="RefSeq" id="WP_015918282.1">
    <property type="nucleotide sequence ID" value="NC_011981.1"/>
</dbReference>
<dbReference type="SMR" id="B9K4P2"/>
<dbReference type="KEGG" id="avi:Avi_7126"/>
<dbReference type="eggNOG" id="COG2141">
    <property type="taxonomic scope" value="Bacteria"/>
</dbReference>
<dbReference type="HOGENOM" id="CLU_027853_1_1_5"/>
<dbReference type="Proteomes" id="UP000001596">
    <property type="component" value="Plasmid pAtS4e"/>
</dbReference>
<dbReference type="GO" id="GO:0008726">
    <property type="term" value="F:alkanesulfonate monooxygenase activity"/>
    <property type="evidence" value="ECO:0007669"/>
    <property type="project" value="TreeGrafter"/>
</dbReference>
<dbReference type="GO" id="GO:0052614">
    <property type="term" value="F:uracil oxygenase activity"/>
    <property type="evidence" value="ECO:0007669"/>
    <property type="project" value="UniProtKB-EC"/>
</dbReference>
<dbReference type="GO" id="GO:0046306">
    <property type="term" value="P:alkanesulfonate catabolic process"/>
    <property type="evidence" value="ECO:0007669"/>
    <property type="project" value="TreeGrafter"/>
</dbReference>
<dbReference type="GO" id="GO:0019740">
    <property type="term" value="P:nitrogen utilization"/>
    <property type="evidence" value="ECO:0007669"/>
    <property type="project" value="UniProtKB-UniRule"/>
</dbReference>
<dbReference type="GO" id="GO:0006212">
    <property type="term" value="P:uracil catabolic process"/>
    <property type="evidence" value="ECO:0007669"/>
    <property type="project" value="UniProtKB-UniRule"/>
</dbReference>
<dbReference type="CDD" id="cd01094">
    <property type="entry name" value="Alkanesulfonate_monoxygenase"/>
    <property type="match status" value="1"/>
</dbReference>
<dbReference type="Gene3D" id="3.20.20.30">
    <property type="entry name" value="Luciferase-like domain"/>
    <property type="match status" value="1"/>
</dbReference>
<dbReference type="HAMAP" id="MF_01699">
    <property type="entry name" value="RutA"/>
    <property type="match status" value="1"/>
</dbReference>
<dbReference type="InterPro" id="IPR011251">
    <property type="entry name" value="Luciferase-like_dom"/>
</dbReference>
<dbReference type="InterPro" id="IPR036661">
    <property type="entry name" value="Luciferase-like_sf"/>
</dbReference>
<dbReference type="InterPro" id="IPR019914">
    <property type="entry name" value="Pyrimidine_monooxygenase_RutA"/>
</dbReference>
<dbReference type="InterPro" id="IPR050172">
    <property type="entry name" value="SsuD_RutA_monooxygenase"/>
</dbReference>
<dbReference type="NCBIfam" id="TIGR03612">
    <property type="entry name" value="RutA"/>
    <property type="match status" value="1"/>
</dbReference>
<dbReference type="PANTHER" id="PTHR42847">
    <property type="entry name" value="ALKANESULFONATE MONOOXYGENASE"/>
    <property type="match status" value="1"/>
</dbReference>
<dbReference type="PANTHER" id="PTHR42847:SF4">
    <property type="entry name" value="ALKANESULFONATE MONOOXYGENASE-RELATED"/>
    <property type="match status" value="1"/>
</dbReference>
<dbReference type="Pfam" id="PF00296">
    <property type="entry name" value="Bac_luciferase"/>
    <property type="match status" value="1"/>
</dbReference>
<dbReference type="SUPFAM" id="SSF51679">
    <property type="entry name" value="Bacterial luciferase-like"/>
    <property type="match status" value="1"/>
</dbReference>
<organism>
    <name type="scientific">Allorhizobium ampelinum (strain ATCC BAA-846 / DSM 112012 / S4)</name>
    <name type="common">Agrobacterium vitis (strain S4)</name>
    <dbReference type="NCBI Taxonomy" id="311402"/>
    <lineage>
        <taxon>Bacteria</taxon>
        <taxon>Pseudomonadati</taxon>
        <taxon>Pseudomonadota</taxon>
        <taxon>Alphaproteobacteria</taxon>
        <taxon>Hyphomicrobiales</taxon>
        <taxon>Rhizobiaceae</taxon>
        <taxon>Rhizobium/Agrobacterium group</taxon>
        <taxon>Allorhizobium</taxon>
        <taxon>Allorhizobium ampelinum</taxon>
    </lineage>
</organism>
<evidence type="ECO:0000255" key="1">
    <source>
        <dbReference type="HAMAP-Rule" id="MF_01699"/>
    </source>
</evidence>
<protein>
    <recommendedName>
        <fullName evidence="1">Pyrimidine monooxygenase RutA</fullName>
        <ecNumber evidence="1">1.14.99.46</ecNumber>
    </recommendedName>
</protein>
<name>RUTA_ALLAM</name>